<reference key="1">
    <citation type="submission" date="2007-07" db="EMBL/GenBank/DDBJ databases">
        <title>Complete sequence of chromosome of Shewanella baltica OS185.</title>
        <authorList>
            <consortium name="US DOE Joint Genome Institute"/>
            <person name="Copeland A."/>
            <person name="Lucas S."/>
            <person name="Lapidus A."/>
            <person name="Barry K."/>
            <person name="Glavina del Rio T."/>
            <person name="Dalin E."/>
            <person name="Tice H."/>
            <person name="Pitluck S."/>
            <person name="Sims D."/>
            <person name="Brettin T."/>
            <person name="Bruce D."/>
            <person name="Detter J.C."/>
            <person name="Han C."/>
            <person name="Schmutz J."/>
            <person name="Larimer F."/>
            <person name="Land M."/>
            <person name="Hauser L."/>
            <person name="Kyrpides N."/>
            <person name="Mikhailova N."/>
            <person name="Brettar I."/>
            <person name="Rodrigues J."/>
            <person name="Konstantinidis K."/>
            <person name="Tiedje J."/>
            <person name="Richardson P."/>
        </authorList>
    </citation>
    <scope>NUCLEOTIDE SEQUENCE [LARGE SCALE GENOMIC DNA]</scope>
    <source>
        <strain>OS185</strain>
    </source>
</reference>
<comment type="function">
    <text evidence="1">ATP-dependent specificity component of the Clp protease. It directs the protease to specific substrates. Can perform chaperone functions in the absence of ClpP.</text>
</comment>
<comment type="subunit">
    <text evidence="1">Component of the ClpX-ClpP complex. Forms a hexameric ring that, in the presence of ATP, binds to fourteen ClpP subunits assembled into a disk-like structure with a central cavity, resembling the structure of eukaryotic proteasomes.</text>
</comment>
<comment type="similarity">
    <text evidence="1">Belongs to the ClpX chaperone family.</text>
</comment>
<feature type="chain" id="PRO_1000024651" description="ATP-dependent Clp protease ATP-binding subunit ClpX">
    <location>
        <begin position="1"/>
        <end position="426"/>
    </location>
</feature>
<feature type="domain" description="ClpX-type ZB" evidence="2">
    <location>
        <begin position="4"/>
        <end position="57"/>
    </location>
</feature>
<feature type="binding site" evidence="2">
    <location>
        <position position="16"/>
    </location>
    <ligand>
        <name>Zn(2+)</name>
        <dbReference type="ChEBI" id="CHEBI:29105"/>
    </ligand>
</feature>
<feature type="binding site" evidence="2">
    <location>
        <position position="19"/>
    </location>
    <ligand>
        <name>Zn(2+)</name>
        <dbReference type="ChEBI" id="CHEBI:29105"/>
    </ligand>
</feature>
<feature type="binding site" evidence="2">
    <location>
        <position position="38"/>
    </location>
    <ligand>
        <name>Zn(2+)</name>
        <dbReference type="ChEBI" id="CHEBI:29105"/>
    </ligand>
</feature>
<feature type="binding site" evidence="2">
    <location>
        <position position="41"/>
    </location>
    <ligand>
        <name>Zn(2+)</name>
        <dbReference type="ChEBI" id="CHEBI:29105"/>
    </ligand>
</feature>
<feature type="binding site" evidence="1">
    <location>
        <begin position="121"/>
        <end position="128"/>
    </location>
    <ligand>
        <name>ATP</name>
        <dbReference type="ChEBI" id="CHEBI:30616"/>
    </ligand>
</feature>
<protein>
    <recommendedName>
        <fullName evidence="1">ATP-dependent Clp protease ATP-binding subunit ClpX</fullName>
    </recommendedName>
</protein>
<proteinExistence type="inferred from homology"/>
<organism>
    <name type="scientific">Shewanella baltica (strain OS185)</name>
    <dbReference type="NCBI Taxonomy" id="402882"/>
    <lineage>
        <taxon>Bacteria</taxon>
        <taxon>Pseudomonadati</taxon>
        <taxon>Pseudomonadota</taxon>
        <taxon>Gammaproteobacteria</taxon>
        <taxon>Alteromonadales</taxon>
        <taxon>Shewanellaceae</taxon>
        <taxon>Shewanella</taxon>
    </lineage>
</organism>
<name>CLPX_SHEB8</name>
<evidence type="ECO:0000255" key="1">
    <source>
        <dbReference type="HAMAP-Rule" id="MF_00175"/>
    </source>
</evidence>
<evidence type="ECO:0000255" key="2">
    <source>
        <dbReference type="PROSITE-ProRule" id="PRU01250"/>
    </source>
</evidence>
<accession>A6WLQ2</accession>
<keyword id="KW-0067">ATP-binding</keyword>
<keyword id="KW-0143">Chaperone</keyword>
<keyword id="KW-0479">Metal-binding</keyword>
<keyword id="KW-0547">Nucleotide-binding</keyword>
<keyword id="KW-0862">Zinc</keyword>
<dbReference type="EMBL" id="CP000753">
    <property type="protein sequence ID" value="ABS07741.1"/>
    <property type="molecule type" value="Genomic_DNA"/>
</dbReference>
<dbReference type="RefSeq" id="WP_012088816.1">
    <property type="nucleotide sequence ID" value="NC_009665.1"/>
</dbReference>
<dbReference type="SMR" id="A6WLQ2"/>
<dbReference type="KEGG" id="sbm:Shew185_1594"/>
<dbReference type="HOGENOM" id="CLU_014218_8_2_6"/>
<dbReference type="GO" id="GO:0009376">
    <property type="term" value="C:HslUV protease complex"/>
    <property type="evidence" value="ECO:0007669"/>
    <property type="project" value="TreeGrafter"/>
</dbReference>
<dbReference type="GO" id="GO:0005524">
    <property type="term" value="F:ATP binding"/>
    <property type="evidence" value="ECO:0007669"/>
    <property type="project" value="UniProtKB-UniRule"/>
</dbReference>
<dbReference type="GO" id="GO:0016887">
    <property type="term" value="F:ATP hydrolysis activity"/>
    <property type="evidence" value="ECO:0007669"/>
    <property type="project" value="InterPro"/>
</dbReference>
<dbReference type="GO" id="GO:0140662">
    <property type="term" value="F:ATP-dependent protein folding chaperone"/>
    <property type="evidence" value="ECO:0007669"/>
    <property type="project" value="InterPro"/>
</dbReference>
<dbReference type="GO" id="GO:0046983">
    <property type="term" value="F:protein dimerization activity"/>
    <property type="evidence" value="ECO:0007669"/>
    <property type="project" value="InterPro"/>
</dbReference>
<dbReference type="GO" id="GO:0051082">
    <property type="term" value="F:unfolded protein binding"/>
    <property type="evidence" value="ECO:0007669"/>
    <property type="project" value="UniProtKB-UniRule"/>
</dbReference>
<dbReference type="GO" id="GO:0008270">
    <property type="term" value="F:zinc ion binding"/>
    <property type="evidence" value="ECO:0007669"/>
    <property type="project" value="InterPro"/>
</dbReference>
<dbReference type="GO" id="GO:0051301">
    <property type="term" value="P:cell division"/>
    <property type="evidence" value="ECO:0007669"/>
    <property type="project" value="TreeGrafter"/>
</dbReference>
<dbReference type="GO" id="GO:0051603">
    <property type="term" value="P:proteolysis involved in protein catabolic process"/>
    <property type="evidence" value="ECO:0007669"/>
    <property type="project" value="TreeGrafter"/>
</dbReference>
<dbReference type="CDD" id="cd19497">
    <property type="entry name" value="RecA-like_ClpX"/>
    <property type="match status" value="1"/>
</dbReference>
<dbReference type="FunFam" id="1.10.8.60:FF:000002">
    <property type="entry name" value="ATP-dependent Clp protease ATP-binding subunit ClpX"/>
    <property type="match status" value="1"/>
</dbReference>
<dbReference type="FunFam" id="3.40.50.300:FF:000005">
    <property type="entry name" value="ATP-dependent Clp protease ATP-binding subunit ClpX"/>
    <property type="match status" value="1"/>
</dbReference>
<dbReference type="Gene3D" id="1.10.8.60">
    <property type="match status" value="1"/>
</dbReference>
<dbReference type="Gene3D" id="6.20.220.10">
    <property type="entry name" value="ClpX chaperone, C4-type zinc finger domain"/>
    <property type="match status" value="1"/>
</dbReference>
<dbReference type="Gene3D" id="3.40.50.300">
    <property type="entry name" value="P-loop containing nucleotide triphosphate hydrolases"/>
    <property type="match status" value="1"/>
</dbReference>
<dbReference type="HAMAP" id="MF_00175">
    <property type="entry name" value="ClpX"/>
    <property type="match status" value="1"/>
</dbReference>
<dbReference type="InterPro" id="IPR003593">
    <property type="entry name" value="AAA+_ATPase"/>
</dbReference>
<dbReference type="InterPro" id="IPR050052">
    <property type="entry name" value="ATP-dep_Clp_protease_ClpX"/>
</dbReference>
<dbReference type="InterPro" id="IPR003959">
    <property type="entry name" value="ATPase_AAA_core"/>
</dbReference>
<dbReference type="InterPro" id="IPR019489">
    <property type="entry name" value="Clp_ATPase_C"/>
</dbReference>
<dbReference type="InterPro" id="IPR004487">
    <property type="entry name" value="Clp_protease_ATP-bd_su_ClpX"/>
</dbReference>
<dbReference type="InterPro" id="IPR046425">
    <property type="entry name" value="ClpX_bact"/>
</dbReference>
<dbReference type="InterPro" id="IPR027417">
    <property type="entry name" value="P-loop_NTPase"/>
</dbReference>
<dbReference type="InterPro" id="IPR010603">
    <property type="entry name" value="Znf_CppX_C4"/>
</dbReference>
<dbReference type="InterPro" id="IPR038366">
    <property type="entry name" value="Znf_CppX_C4_sf"/>
</dbReference>
<dbReference type="NCBIfam" id="TIGR00382">
    <property type="entry name" value="clpX"/>
    <property type="match status" value="1"/>
</dbReference>
<dbReference type="NCBIfam" id="NF003745">
    <property type="entry name" value="PRK05342.1"/>
    <property type="match status" value="1"/>
</dbReference>
<dbReference type="PANTHER" id="PTHR48102:SF7">
    <property type="entry name" value="ATP-DEPENDENT CLP PROTEASE ATP-BINDING SUBUNIT CLPX-LIKE, MITOCHONDRIAL"/>
    <property type="match status" value="1"/>
</dbReference>
<dbReference type="PANTHER" id="PTHR48102">
    <property type="entry name" value="ATP-DEPENDENT CLP PROTEASE ATP-BINDING SUBUNIT CLPX-LIKE, MITOCHONDRIAL-RELATED"/>
    <property type="match status" value="1"/>
</dbReference>
<dbReference type="Pfam" id="PF07724">
    <property type="entry name" value="AAA_2"/>
    <property type="match status" value="1"/>
</dbReference>
<dbReference type="Pfam" id="PF10431">
    <property type="entry name" value="ClpB_D2-small"/>
    <property type="match status" value="1"/>
</dbReference>
<dbReference type="Pfam" id="PF06689">
    <property type="entry name" value="zf-C4_ClpX"/>
    <property type="match status" value="1"/>
</dbReference>
<dbReference type="SMART" id="SM00382">
    <property type="entry name" value="AAA"/>
    <property type="match status" value="1"/>
</dbReference>
<dbReference type="SMART" id="SM01086">
    <property type="entry name" value="ClpB_D2-small"/>
    <property type="match status" value="1"/>
</dbReference>
<dbReference type="SMART" id="SM00994">
    <property type="entry name" value="zf-C4_ClpX"/>
    <property type="match status" value="1"/>
</dbReference>
<dbReference type="SUPFAM" id="SSF57716">
    <property type="entry name" value="Glucocorticoid receptor-like (DNA-binding domain)"/>
    <property type="match status" value="1"/>
</dbReference>
<dbReference type="SUPFAM" id="SSF52540">
    <property type="entry name" value="P-loop containing nucleoside triphosphate hydrolases"/>
    <property type="match status" value="1"/>
</dbReference>
<dbReference type="PROSITE" id="PS51902">
    <property type="entry name" value="CLPX_ZB"/>
    <property type="match status" value="1"/>
</dbReference>
<sequence>MGDNKNNGDSGKLLYCSFCGKSQHEVRKLIAGPSVYVCDECVELCNDIIREEIKEISPKRDSDKLPTPHELRAHLDDYVIGQDRAKKVLSVAVYNHYKRLKNASPKDGIELGKSNILLIGPTGSGKTLLAETLARSLNVPFTMADATTLTEAGYVGEDVENIIQKLLQKCDYDVEKAQRGIVYIDEIDKISRKSDNPSITRDVSGEGVQQALLKLIEGTVAAVPPQGGRKHPQQEFLQVDTSKILFICGGAFAGLEKVIEQRAHVGSGIGFGAQVKGEKEKATISETLTQVEPGDLVKYGLIPEFIGRLPVVATLTELDEEALVQILSQPKNALTKQYSALFEMEGVELEFREDALKAIAHKAMSRKTGARGLRSIVESILLDTMYDIPSVDGVVKAVVDESVVKGESAPILIYEHNEAQAVSGEQ</sequence>
<gene>
    <name evidence="1" type="primary">clpX</name>
    <name type="ordered locus">Shew185_1594</name>
</gene>